<reference key="1">
    <citation type="journal article" date="2003" name="J. Bacteriol.">
        <title>Characterization of a spontaneous nonmagnetic mutant of Magnetospirillum gryphiswaldense reveals a large deletion comprising a putative magnetosome island.</title>
        <authorList>
            <person name="Schuebbe S."/>
            <person name="Kube M."/>
            <person name="Scheffel A."/>
            <person name="Wawer C."/>
            <person name="Heyen U."/>
            <person name="Meyerdierks A."/>
            <person name="Madkour M.H."/>
            <person name="Mayer F."/>
            <person name="Reinhardt R."/>
            <person name="Schueler D."/>
        </authorList>
    </citation>
    <scope>NUCLEOTIDE SEQUENCE [GENOMIC DNA]</scope>
    <scope>PROBABLE OPERON</scope>
    <scope>DISRUPTION PHENOTYPE</scope>
    <source>
        <strain>DSM 6361 / JCM 21280 / NBRC 15271 / MSR-1</strain>
    </source>
</reference>
<reference key="2">
    <citation type="journal article" date="2005" name="J. Bacteriol.">
        <title>A hypervariable 130-kilobase genomic region of Magnetospirillum gryphiswaldense comprises a magnetosome island which undergoes frequent rearrangements during stationary growth.</title>
        <authorList>
            <person name="Ullrich S."/>
            <person name="Kube M."/>
            <person name="Schuebbe S."/>
            <person name="Reinhardt R."/>
            <person name="Schueler D."/>
        </authorList>
    </citation>
    <scope>NUCLEOTIDE SEQUENCE [GENOMIC DNA]</scope>
    <source>
        <strain>DSM 6361 / JCM 21280 / NBRC 15271 / MSR-1</strain>
    </source>
</reference>
<reference key="3">
    <citation type="journal article" date="2007" name="J. Bacteriol.">
        <title>Comparative genome analysis of four magnetotactic bacteria reveals a complex set of group-specific genes implicated in magnetosome biomineralization and function.</title>
        <authorList>
            <person name="Richter M."/>
            <person name="Kube M."/>
            <person name="Bazylinski D.A."/>
            <person name="Lombardot T."/>
            <person name="Gloeckner F.O."/>
            <person name="Reinhardt R."/>
            <person name="Schueler D."/>
        </authorList>
    </citation>
    <scope>NUCLEOTIDE SEQUENCE [LARGE SCALE GENOMIC DNA]</scope>
    <source>
        <strain>DSM 6361 / JCM 21280 / NBRC 15271 / MSR-1</strain>
    </source>
</reference>
<reference key="4">
    <citation type="journal article" date="2014" name="Genome Announc.">
        <title>Complete genome sequence of Magnetospirillum gryphiswaldense MSR-1.</title>
        <authorList>
            <person name="Wang X."/>
            <person name="Wang Q."/>
            <person name="Zhang W."/>
            <person name="Wang Y."/>
            <person name="Li L."/>
            <person name="Wen T."/>
            <person name="Zhang T."/>
            <person name="Zhang Y."/>
            <person name="Xu J."/>
            <person name="Hu J."/>
            <person name="Li S."/>
            <person name="Liu L."/>
            <person name="Liu J."/>
            <person name="Jiang W."/>
            <person name="Tian J."/>
            <person name="Li Y."/>
            <person name="Schuler D."/>
            <person name="Wang L."/>
            <person name="Li J."/>
        </authorList>
    </citation>
    <scope>NUCLEOTIDE SEQUENCE [LARGE SCALE GENOMIC DNA]</scope>
    <source>
        <strain>DSM 6361 / JCM 21280 / NBRC 15271 / MSR-1</strain>
    </source>
</reference>
<reference key="5">
    <citation type="journal article" date="2004" name="Appl. Environ. Microbiol.">
        <title>Biochemical and proteomic analysis of the magnetosome membrane in Magnetospirillum gryphiswaldense.</title>
        <authorList>
            <person name="Gruenberg K."/>
            <person name="Mueller E.C."/>
            <person name="Otto A."/>
            <person name="Reszka R."/>
            <person name="Linder D."/>
            <person name="Kube M."/>
            <person name="Reinhardt R."/>
            <person name="Schueler D."/>
        </authorList>
    </citation>
    <scope>PROTEIN SEQUENCE OF 1-10</scope>
    <scope>SUBCELLULAR LOCATION</scope>
    <scope>IDENTIFICATION BY MASS SPECTROMETRY</scope>
    <source>
        <strain>DSM 6361 / JCM 21280 / NBRC 15271 / MSR-1</strain>
    </source>
</reference>
<reference key="6">
    <citation type="journal article" date="2011" name="Mol. Microbiol.">
        <title>The cation diffusion facilitator proteins MamB and MamM of Magnetospirillum gryphiswaldense have distinct and complex functions, and are involved in magnetite biomineralization and magnetosome membrane assembly.</title>
        <authorList>
            <person name="Uebe R."/>
            <person name="Junge K."/>
            <person name="Henn V."/>
            <person name="Poxleitner G."/>
            <person name="Katzmann E."/>
            <person name="Plitzko J.M."/>
            <person name="Zarivach R."/>
            <person name="Kasama T."/>
            <person name="Wanner G."/>
            <person name="Posfai M."/>
            <person name="Boettger L."/>
            <person name="Matzanke B."/>
            <person name="Schueler D."/>
        </authorList>
    </citation>
    <scope>FUNCTION</scope>
    <scope>SUBUNIT</scope>
    <scope>SUBCELLULAR LOCATION</scope>
    <scope>DISRUPTION PHENOTYPE</scope>
    <scope>MUTAGENESIS OF 6-CYS--CYS-9; CYS-9; TYR-46; ASP-50; HIS-155; ASP-159; 259-THR--ASN-318; 289-GLU--ASN-318 AND 309-ASP--ASN-318</scope>
    <source>
        <strain>DSM 6361 / JCM 21280 / NBRC 15271 / MSR-1</strain>
    </source>
</reference>
<reference key="7">
    <citation type="journal article" date="2011" name="PLoS ONE">
        <title>Functional analysis of the magnetosome island in Magnetospirillum gryphiswaldense: the mamAB operon is sufficient for magnetite biomineralization.</title>
        <authorList>
            <person name="Lohsse A."/>
            <person name="Ullrich S."/>
            <person name="Katzmann E."/>
            <person name="Borg S."/>
            <person name="Wanner G."/>
            <person name="Richter M."/>
            <person name="Voigt B."/>
            <person name="Schweder T."/>
            <person name="Schueler D."/>
        </authorList>
    </citation>
    <scope>MINIMAL MAGNETOSOME ISLAND</scope>
    <source>
        <strain>DSM 6361 / JCM 21280 / NBRC 15271 / MSR-1</strain>
    </source>
</reference>
<reference key="8">
    <citation type="journal article" date="2016" name="PLoS Genet.">
        <title>Genetic and Ultrastructural Analysis Reveals the Key Players and Initial Steps of Bacterial Magnetosome Membrane Biogenesis.</title>
        <authorList>
            <person name="Raschdorf O."/>
            <person name="Forstner Y."/>
            <person name="Kolinko I."/>
            <person name="Uebe R."/>
            <person name="Plitzko J.M."/>
            <person name="Schueler D."/>
        </authorList>
    </citation>
    <scope>FUNCTION</scope>
    <scope>MINIMAL VESICLE FORMATION GENES</scope>
    <scope>DISRUPTION PHENOTYPE</scope>
    <source>
        <strain>DSM 6361 / JCM 21280 / NBRC 15271 / MSR-1</strain>
    </source>
</reference>
<reference key="9">
    <citation type="journal article" date="2018" name="Mol. Microbiol.">
        <title>The dual role of MamB in magnetosome membrane assembly and magnetite biomineralization.</title>
        <authorList>
            <person name="Uebe R."/>
            <person name="Keren-Khadmy N."/>
            <person name="Zeytuni N."/>
            <person name="Katzmann E."/>
            <person name="Navon Y."/>
            <person name="Davidov G."/>
            <person name="Bitton R."/>
            <person name="Plitzko J.M."/>
            <person name="Schuler D."/>
            <person name="Zarivach R."/>
        </authorList>
    </citation>
    <scope>SUBUNIT</scope>
    <scope>DOMAIN</scope>
    <source>
        <strain>DSM 6361 / JCM 21280 / NBRC 15271 / MSR-1</strain>
    </source>
</reference>
<reference evidence="32" key="10">
    <citation type="journal article" date="2014" name="PLoS ONE">
        <title>Bacterial magnetosome biomineralization--a novel platform to study molecular mechanisms of human CDF-related Type-II diabetes.</title>
        <authorList>
            <person name="Zeytuni N."/>
            <person name="Uebe R."/>
            <person name="Maes M."/>
            <person name="Davidov G."/>
            <person name="Baram M."/>
            <person name="Raschdorf O."/>
            <person name="Friedler A."/>
            <person name="Miller Y."/>
            <person name="Schuler D."/>
            <person name="Zarivach R."/>
        </authorList>
    </citation>
    <scope>X-RAY CRYSTALLOGRAPHY (2.05 ANGSTROMS) OF 215-318</scope>
    <scope>FUNCTION</scope>
    <scope>PROBABLE IRON-BINDING</scope>
    <scope>SUBUNIT</scope>
    <scope>MUTAGENESIS OF VAL-260</scope>
    <source>
        <strain>DSM 6361 / JCM 21280 / NBRC 15271 / MSR-1</strain>
    </source>
</reference>
<reference evidence="22 23 24 25 26 27 28 29 30 31 33" key="11">
    <citation type="journal article" date="2014" name="PLoS ONE">
        <title>Cation diffusion facilitators transport initiation and regulation is mediated by cation induced conformational changes of the cytoplasmic domain.</title>
        <authorList>
            <person name="Zeytuni N."/>
            <person name="Uebe R."/>
            <person name="Maes M."/>
            <person name="Davidov G."/>
            <person name="Baram M."/>
            <person name="Raschdorf O."/>
            <person name="Nadav-Tsubery M."/>
            <person name="Kolusheva S."/>
            <person name="Bitton R."/>
            <person name="Goobes G."/>
            <person name="Friedler A."/>
            <person name="Miller Y."/>
            <person name="Schuler D."/>
            <person name="Zarivach R."/>
        </authorList>
    </citation>
    <scope>X-RAY CRYSTALLOGRAPHY (1.59 ANGSTROMS) OF 215-318</scope>
    <scope>FUNCTION</scope>
    <scope>PROBABLE IRON-BINDING</scope>
    <scope>SUBUNIT</scope>
    <scope>DOMAIN</scope>
    <scope>MUTAGENESIS OF ASP-249; VAL-260; HIS-264; HIS-285 AND GLU-289</scope>
    <source>
        <strain>DSM 6361 / JCM 21280 / NBRC 15271 / MSR-1</strain>
    </source>
</reference>
<reference evidence="34" key="12">
    <citation type="journal article" date="2016" name="Sci. Rep.">
        <title>Disease-Homologous Mutation in the Cation Diffusion Facilitator Protein MamM Causes Single-Domain Structural Loss and Signifies Its Importance.</title>
        <authorList>
            <person name="Barber-Zucker S."/>
            <person name="Uebe R."/>
            <person name="Davidov G."/>
            <person name="Navon Y."/>
            <person name="Sherf D."/>
            <person name="Chill J.H."/>
            <person name="Kass I."/>
            <person name="Bitton R."/>
            <person name="Schuler D."/>
            <person name="Zarivach R."/>
        </authorList>
    </citation>
    <scope>X-RAY CRYSTALLOGRAPHY (1.79 ANGSTROMS) OF 215-318</scope>
    <scope>FUNCTION</scope>
    <scope>SUBUNIT</scope>
    <scope>DOMAIN</scope>
    <scope>MUTAGENESIS OF MET-250</scope>
    <source>
        <strain>DSM 6361 / JCM 21280 / NBRC 15271 / MSR-1</strain>
    </source>
</reference>
<reference evidence="35 36 37 38" key="13">
    <citation type="journal article" date="2019" name="FEBS J.">
        <title>Metal binding to the dynamic cytoplasmic domain of the cation diffusion facilitator (CDF) protein MamM induces a 'locked-in' configuration.</title>
        <authorList>
            <person name="Barber-Zucker S."/>
            <person name="Hall J."/>
            <person name="Mangapuram S.V."/>
            <person name="Kass I."/>
            <person name="Kolusheva S."/>
            <person name="MacMillan F."/>
            <person name="Zarivach R."/>
            <person name="Henn A."/>
        </authorList>
    </citation>
    <scope>X-RAY CRYSTALLOGRAPHY (1.60 ANGSTROMS) OF 215-318</scope>
    <scope>FUNCTION</scope>
    <scope>PROBABLE IRON-BINDING</scope>
    <scope>SUBUNIT</scope>
    <scope>MUTAGENESIS OF 249-ASP--HIS-285 AND 264-HIS--GLU-289</scope>
    <source>
        <strain>DSM 6361 / JCM 21280 / NBRC 15271 / MSR-1</strain>
    </source>
</reference>
<proteinExistence type="evidence at protein level"/>
<comment type="function">
    <text evidence="4 8 11 17 18 19">Essential for magnetosome formation; required for stable accumulation of MamB (PubMed:22007638). May nucleate iron crystal formation (Probable). Probably binds and transports iron. Binds divalent cations, possibly up to 3 Zn(2+) per dimer in vitro, probably iron in vivo (Probable) (PubMed:30811856). One of 7 genes (mamLQBIEMO) able to induce magnetosome membrane biogenesis; coexpression of mamLQRBIEMO in a deletion of the 17 gene mamAB operon restores magnetosome vesicle formation but not magnetite biosynthesis (PubMed:27286560).</text>
</comment>
<comment type="subunit">
    <text evidence="4 6 7 9 10 11 17 18 19">Forms homodimers via its C-terminal domain (CTD) in the presence of metal cations (Probable). Interacts with MamB via their CTD (Probable) (PubMed:22007638, PubMed:29243866). Isolated CTD forms homodimers (PubMed:24658343, PubMed:24819161, PubMed:27550551, PubMed:30811856).</text>
</comment>
<comment type="subcellular location">
    <subcellularLocation>
        <location evidence="3 4">Magnetosome membrane</location>
        <topology evidence="1">Multi-pass membrane protein</topology>
    </subcellularLocation>
    <subcellularLocation>
        <location evidence="17">Cell inner membrane</location>
        <topology evidence="1">Multi-pass membrane protein</topology>
    </subcellularLocation>
    <text evidence="4">Localizes with magnetosomes in a straight line running through the center of the cell.</text>
</comment>
<comment type="induction">
    <text evidence="16">Part of the probable 17 gene mamAB operon.</text>
</comment>
<comment type="domain">
    <text evidence="6 11 18 19 20">The C-terminal domain (CTD) is probably responsible for hetero- and homodimerization; it assumes a V-shaped, dimeric metallo-chaperone-like fold that can open and close. Val-260 forms the hinge between the dimers. Binds up to 3 divalent metal cations (probably iron in vivo); upon binding there is a conformational shift to a tighter dimer (Probable) (PubMed:24658343, PubMed:30811856). If the CTD cannot fold correctly the function of the whole protein is decreased, suggesting the CTD confers functionality on the transmembrane domain (TMD), perhaps activated by ligand binding to the CTD (Probable).</text>
</comment>
<comment type="disruption phenotype">
    <text evidence="2 4 8">Single gene disruption has no growth defects, no accumulation of magnetite, forms empty intracellular magnetosome vesicles, decreased levels of MamB, mislocation of MamC in 1-3 foci or rarely in a shortened chain (PubMed:22007638). Magnetosome vesicles are fewer and smaller, aligned in a chain with the filament, only a few have very small crystals. Other, possibly precursor magnetosome vesicles are visible. MamI mislocalized to cell inner membrane or in 1 to a few patches (PubMed:27286560). Deletion of approximately 80 kb of DNA, including this operon, leads to cells that are non-magnetic, lack internal membrane systems, grow poorly, have reduced mobility and take-up and accumulate iron poorly (PubMed:13129949).</text>
</comment>
<comment type="miscellaneous">
    <text evidence="16">This bacteria makes up to 60 cubo-octahedral magnetosomes of about 45 nm in diameter which contain membrane-bound crystals of magnetite (Fe(3)O(4)).</text>
</comment>
<comment type="miscellaneous">
    <text evidence="5">Expression of just the minimal mamAB gene cluster (MGMSRv2__2365 to MGMSRv2__2381), including this gene, is sufficient to form a minimal magnetosome chain with small magnetite particles.</text>
</comment>
<comment type="miscellaneous">
    <text evidence="13 14">Cation diffusion facilitator (CDF) transporters all have similar domain structure. By recreating in MamM mutations known in paralogous human zinc transporters (Znt-8, SLC30A8 and ZnT-10, SLC30A10), information about the effects of these mutations can be learned.</text>
</comment>
<comment type="similarity">
    <text evidence="17">Belongs to the cation diffusion facilitator (CDF) transporter (TC 2.A.4) family.</text>
</comment>
<comment type="online information" name="Protein Spotlight">
    <link uri="https://www.proteinspotlight.org/back_issues/217/"/>
    <text>A sense of direction - Issue 217 of September 2019</text>
</comment>
<dbReference type="EMBL" id="BX571797">
    <property type="protein sequence ID" value="CAE12036.1"/>
    <property type="molecule type" value="Genomic_DNA"/>
</dbReference>
<dbReference type="EMBL" id="CU459003">
    <property type="protein sequence ID" value="CAM78027.1"/>
    <property type="molecule type" value="Genomic_DNA"/>
</dbReference>
<dbReference type="EMBL" id="AM085146">
    <property type="protein sequence ID" value="CAJ30120.1"/>
    <property type="molecule type" value="Genomic_DNA"/>
</dbReference>
<dbReference type="EMBL" id="HG794546">
    <property type="protein sequence ID" value="CDK99590.1"/>
    <property type="molecule type" value="Genomic_DNA"/>
</dbReference>
<dbReference type="RefSeq" id="WP_024080586.1">
    <property type="nucleotide sequence ID" value="NZ_CP027526.1"/>
</dbReference>
<dbReference type="PDB" id="3W5X">
    <property type="method" value="X-ray"/>
    <property type="resolution" value="1.60 A"/>
    <property type="chains" value="A=215-318"/>
</dbReference>
<dbReference type="PDB" id="3W5Y">
    <property type="method" value="X-ray"/>
    <property type="resolution" value="1.95 A"/>
    <property type="chains" value="A/B=215-318"/>
</dbReference>
<dbReference type="PDB" id="3W5Z">
    <property type="method" value="X-ray"/>
    <property type="resolution" value="1.66 A"/>
    <property type="chains" value="A=215-318"/>
</dbReference>
<dbReference type="PDB" id="3W60">
    <property type="method" value="X-ray"/>
    <property type="resolution" value="1.82 A"/>
    <property type="chains" value="A=215-318"/>
</dbReference>
<dbReference type="PDB" id="3W61">
    <property type="method" value="X-ray"/>
    <property type="resolution" value="1.59 A"/>
    <property type="chains" value="A=215-318"/>
</dbReference>
<dbReference type="PDB" id="3W62">
    <property type="method" value="X-ray"/>
    <property type="resolution" value="1.64 A"/>
    <property type="chains" value="A=215-318"/>
</dbReference>
<dbReference type="PDB" id="3W63">
    <property type="method" value="X-ray"/>
    <property type="resolution" value="1.90 A"/>
    <property type="chains" value="A=215-293"/>
</dbReference>
<dbReference type="PDB" id="3W64">
    <property type="method" value="X-ray"/>
    <property type="resolution" value="2.85 A"/>
    <property type="chains" value="A/B/C/D=215-293"/>
</dbReference>
<dbReference type="PDB" id="3W65">
    <property type="method" value="X-ray"/>
    <property type="resolution" value="2.37 A"/>
    <property type="chains" value="A=215-318"/>
</dbReference>
<dbReference type="PDB" id="3W66">
    <property type="method" value="X-ray"/>
    <property type="resolution" value="2.05 A"/>
    <property type="chains" value="A=215-318"/>
</dbReference>
<dbReference type="PDB" id="3W8G">
    <property type="method" value="X-ray"/>
    <property type="resolution" value="2.05 A"/>
    <property type="chains" value="A/B=215-318"/>
</dbReference>
<dbReference type="PDB" id="3W8P">
    <property type="method" value="X-ray"/>
    <property type="resolution" value="1.80 A"/>
    <property type="chains" value="A/B=215-318"/>
</dbReference>
<dbReference type="PDB" id="5HSP">
    <property type="method" value="X-ray"/>
    <property type="resolution" value="1.79 A"/>
    <property type="chains" value="A/D=215-318"/>
</dbReference>
<dbReference type="PDB" id="6G55">
    <property type="method" value="X-ray"/>
    <property type="resolution" value="1.65 A"/>
    <property type="chains" value="A/D=215-318"/>
</dbReference>
<dbReference type="PDB" id="6G5E">
    <property type="method" value="X-ray"/>
    <property type="resolution" value="1.60 A"/>
    <property type="chains" value="A=215-318"/>
</dbReference>
<dbReference type="PDB" id="6G64">
    <property type="method" value="X-ray"/>
    <property type="resolution" value="1.90 A"/>
    <property type="chains" value="A=215-318"/>
</dbReference>
<dbReference type="PDB" id="6G6I">
    <property type="method" value="X-ray"/>
    <property type="resolution" value="2.40 A"/>
    <property type="chains" value="A/B=215-318"/>
</dbReference>
<dbReference type="PDB" id="6GMT">
    <property type="method" value="X-ray"/>
    <property type="resolution" value="1.59 A"/>
    <property type="chains" value="A=215-318"/>
</dbReference>
<dbReference type="PDB" id="6GMV">
    <property type="method" value="X-ray"/>
    <property type="resolution" value="1.59 A"/>
    <property type="chains" value="A=215-318"/>
</dbReference>
<dbReference type="PDB" id="6GP6">
    <property type="method" value="X-ray"/>
    <property type="resolution" value="2.15 A"/>
    <property type="chains" value="A/B=215-318"/>
</dbReference>
<dbReference type="PDB" id="6H5K">
    <property type="method" value="X-ray"/>
    <property type="resolution" value="1.54 A"/>
    <property type="chains" value="A=215-318"/>
</dbReference>
<dbReference type="PDB" id="6H5M">
    <property type="method" value="X-ray"/>
    <property type="resolution" value="1.60 A"/>
    <property type="chains" value="A=215-318"/>
</dbReference>
<dbReference type="PDB" id="6H5U">
    <property type="method" value="X-ray"/>
    <property type="resolution" value="2.00 A"/>
    <property type="chains" value="A/B/C/H=215-318"/>
</dbReference>
<dbReference type="PDB" id="6H5V">
    <property type="method" value="X-ray"/>
    <property type="resolution" value="1.49 A"/>
    <property type="chains" value="A=215-318"/>
</dbReference>
<dbReference type="PDB" id="6H81">
    <property type="method" value="X-ray"/>
    <property type="resolution" value="1.50 A"/>
    <property type="chains" value="A=215-318"/>
</dbReference>
<dbReference type="PDB" id="6H83">
    <property type="method" value="X-ray"/>
    <property type="resolution" value="1.50 A"/>
    <property type="chains" value="A=215-318"/>
</dbReference>
<dbReference type="PDB" id="6H84">
    <property type="method" value="X-ray"/>
    <property type="resolution" value="2.04 A"/>
    <property type="chains" value="A=215-318"/>
</dbReference>
<dbReference type="PDB" id="6H85">
    <property type="method" value="X-ray"/>
    <property type="resolution" value="2.00 A"/>
    <property type="chains" value="A=215-318"/>
</dbReference>
<dbReference type="PDB" id="6H87">
    <property type="method" value="X-ray"/>
    <property type="resolution" value="1.50 A"/>
    <property type="chains" value="A=215-318"/>
</dbReference>
<dbReference type="PDB" id="6H88">
    <property type="method" value="X-ray"/>
    <property type="resolution" value="1.50 A"/>
    <property type="chains" value="A=215-318"/>
</dbReference>
<dbReference type="PDB" id="6H89">
    <property type="method" value="X-ray"/>
    <property type="resolution" value="1.70 A"/>
    <property type="chains" value="A=215-318"/>
</dbReference>
<dbReference type="PDB" id="6H8A">
    <property type="method" value="X-ray"/>
    <property type="resolution" value="1.80 A"/>
    <property type="chains" value="A=215-318"/>
</dbReference>
<dbReference type="PDB" id="6H8D">
    <property type="method" value="X-ray"/>
    <property type="resolution" value="1.62 A"/>
    <property type="chains" value="A=215-318"/>
</dbReference>
<dbReference type="PDB" id="6H8G">
    <property type="method" value="X-ray"/>
    <property type="resolution" value="1.35 A"/>
    <property type="chains" value="A=215-318"/>
</dbReference>
<dbReference type="PDB" id="6H8I">
    <property type="method" value="X-ray"/>
    <property type="resolution" value="1.40 A"/>
    <property type="chains" value="A=215-318"/>
</dbReference>
<dbReference type="PDB" id="6H9P">
    <property type="method" value="X-ray"/>
    <property type="resolution" value="2.10 A"/>
    <property type="chains" value="A/B/C=215-318"/>
</dbReference>
<dbReference type="PDB" id="6H9Q">
    <property type="method" value="X-ray"/>
    <property type="resolution" value="1.50 A"/>
    <property type="chains" value="A=215-318"/>
</dbReference>
<dbReference type="PDB" id="6H9T">
    <property type="method" value="X-ray"/>
    <property type="resolution" value="1.70 A"/>
    <property type="chains" value="A=215-318"/>
</dbReference>
<dbReference type="PDB" id="6HA2">
    <property type="method" value="X-ray"/>
    <property type="resolution" value="1.50 A"/>
    <property type="chains" value="A=215-318"/>
</dbReference>
<dbReference type="PDB" id="6HAN">
    <property type="method" value="X-ray"/>
    <property type="resolution" value="2.60 A"/>
    <property type="chains" value="A/B/C/D=215-318"/>
</dbReference>
<dbReference type="PDB" id="6HAO">
    <property type="method" value="X-ray"/>
    <property type="resolution" value="2.40 A"/>
    <property type="chains" value="A=215-318"/>
</dbReference>
<dbReference type="PDB" id="6HHS">
    <property type="method" value="X-ray"/>
    <property type="resolution" value="2.70 A"/>
    <property type="chains" value="A/B/C/D/E/F/G=215-318"/>
</dbReference>
<dbReference type="PDBsum" id="3W5X"/>
<dbReference type="PDBsum" id="3W5Y"/>
<dbReference type="PDBsum" id="3W5Z"/>
<dbReference type="PDBsum" id="3W60"/>
<dbReference type="PDBsum" id="3W61"/>
<dbReference type="PDBsum" id="3W62"/>
<dbReference type="PDBsum" id="3W63"/>
<dbReference type="PDBsum" id="3W64"/>
<dbReference type="PDBsum" id="3W65"/>
<dbReference type="PDBsum" id="3W66"/>
<dbReference type="PDBsum" id="3W8G"/>
<dbReference type="PDBsum" id="3W8P"/>
<dbReference type="PDBsum" id="5HSP"/>
<dbReference type="PDBsum" id="6G55"/>
<dbReference type="PDBsum" id="6G5E"/>
<dbReference type="PDBsum" id="6G64"/>
<dbReference type="PDBsum" id="6G6I"/>
<dbReference type="PDBsum" id="6GMT"/>
<dbReference type="PDBsum" id="6GMV"/>
<dbReference type="PDBsum" id="6GP6"/>
<dbReference type="PDBsum" id="6H5K"/>
<dbReference type="PDBsum" id="6H5M"/>
<dbReference type="PDBsum" id="6H5U"/>
<dbReference type="PDBsum" id="6H5V"/>
<dbReference type="PDBsum" id="6H81"/>
<dbReference type="PDBsum" id="6H83"/>
<dbReference type="PDBsum" id="6H84"/>
<dbReference type="PDBsum" id="6H85"/>
<dbReference type="PDBsum" id="6H87"/>
<dbReference type="PDBsum" id="6H88"/>
<dbReference type="PDBsum" id="6H89"/>
<dbReference type="PDBsum" id="6H8A"/>
<dbReference type="PDBsum" id="6H8D"/>
<dbReference type="PDBsum" id="6H8G"/>
<dbReference type="PDBsum" id="6H8I"/>
<dbReference type="PDBsum" id="6H9P"/>
<dbReference type="PDBsum" id="6H9Q"/>
<dbReference type="PDBsum" id="6H9T"/>
<dbReference type="PDBsum" id="6HA2"/>
<dbReference type="PDBsum" id="6HAN"/>
<dbReference type="PDBsum" id="6HAO"/>
<dbReference type="PDBsum" id="6HHS"/>
<dbReference type="SMR" id="V6F235"/>
<dbReference type="STRING" id="1430440.MGMSRv2__2375"/>
<dbReference type="TCDB" id="2.A.4.7.4">
    <property type="family name" value="the cation diffusion facilitator (cdf) family"/>
</dbReference>
<dbReference type="KEGG" id="mgry:MSR1_03400"/>
<dbReference type="KEGG" id="mgy:MGMSRv2__2375"/>
<dbReference type="eggNOG" id="COG0053">
    <property type="taxonomic scope" value="Bacteria"/>
</dbReference>
<dbReference type="HOGENOM" id="CLU_013430_3_6_5"/>
<dbReference type="OrthoDB" id="9806522at2"/>
<dbReference type="EvolutionaryTrace" id="V6F235"/>
<dbReference type="Proteomes" id="UP000018922">
    <property type="component" value="Chromosome I"/>
</dbReference>
<dbReference type="GO" id="GO:0110146">
    <property type="term" value="C:magnetosome membrane"/>
    <property type="evidence" value="ECO:0000314"/>
    <property type="project" value="UniProtKB"/>
</dbReference>
<dbReference type="GO" id="GO:0005886">
    <property type="term" value="C:plasma membrane"/>
    <property type="evidence" value="ECO:0007669"/>
    <property type="project" value="UniProtKB-SubCell"/>
</dbReference>
<dbReference type="GO" id="GO:0046872">
    <property type="term" value="F:metal ion binding"/>
    <property type="evidence" value="ECO:0007669"/>
    <property type="project" value="UniProtKB-KW"/>
</dbReference>
<dbReference type="GO" id="GO:0008324">
    <property type="term" value="F:monoatomic cation transmembrane transporter activity"/>
    <property type="evidence" value="ECO:0007669"/>
    <property type="project" value="InterPro"/>
</dbReference>
<dbReference type="GO" id="GO:0006826">
    <property type="term" value="P:iron ion transport"/>
    <property type="evidence" value="ECO:0007669"/>
    <property type="project" value="UniProtKB-KW"/>
</dbReference>
<dbReference type="Gene3D" id="1.20.1510.10">
    <property type="entry name" value="Cation efflux protein transmembrane domain"/>
    <property type="match status" value="1"/>
</dbReference>
<dbReference type="Gene3D" id="3.30.70.1350">
    <property type="entry name" value="Cation efflux protein, cytoplasmic domain"/>
    <property type="match status" value="1"/>
</dbReference>
<dbReference type="InterPro" id="IPR002524">
    <property type="entry name" value="Cation_efflux"/>
</dbReference>
<dbReference type="InterPro" id="IPR027470">
    <property type="entry name" value="Cation_efflux_CTD"/>
</dbReference>
<dbReference type="InterPro" id="IPR036837">
    <property type="entry name" value="Cation_efflux_CTD_sf"/>
</dbReference>
<dbReference type="InterPro" id="IPR027469">
    <property type="entry name" value="Cation_efflux_TMD_sf"/>
</dbReference>
<dbReference type="InterPro" id="IPR050291">
    <property type="entry name" value="CDF_Transporter"/>
</dbReference>
<dbReference type="InterPro" id="IPR053502">
    <property type="entry name" value="Magnetosome_CDF-Related"/>
</dbReference>
<dbReference type="NCBIfam" id="TIGR01297">
    <property type="entry name" value="CDF"/>
    <property type="match status" value="1"/>
</dbReference>
<dbReference type="NCBIfam" id="NF033615">
    <property type="entry name" value="CDF_MamM"/>
    <property type="match status" value="1"/>
</dbReference>
<dbReference type="PANTHER" id="PTHR43840">
    <property type="entry name" value="MITOCHONDRIAL METAL TRANSPORTER 1-RELATED"/>
    <property type="match status" value="1"/>
</dbReference>
<dbReference type="PANTHER" id="PTHR43840:SF15">
    <property type="entry name" value="MITOCHONDRIAL METAL TRANSPORTER 1-RELATED"/>
    <property type="match status" value="1"/>
</dbReference>
<dbReference type="Pfam" id="PF01545">
    <property type="entry name" value="Cation_efflux"/>
    <property type="match status" value="1"/>
</dbReference>
<dbReference type="Pfam" id="PF16916">
    <property type="entry name" value="ZT_dimer"/>
    <property type="match status" value="1"/>
</dbReference>
<dbReference type="SUPFAM" id="SSF160240">
    <property type="entry name" value="Cation efflux protein cytoplasmic domain-like"/>
    <property type="match status" value="1"/>
</dbReference>
<dbReference type="SUPFAM" id="SSF161111">
    <property type="entry name" value="Cation efflux protein transmembrane domain-like"/>
    <property type="match status" value="1"/>
</dbReference>
<evidence type="ECO:0000255" key="1"/>
<evidence type="ECO:0000269" key="2">
    <source>
    </source>
</evidence>
<evidence type="ECO:0000269" key="3">
    <source>
    </source>
</evidence>
<evidence type="ECO:0000269" key="4">
    <source>
    </source>
</evidence>
<evidence type="ECO:0000269" key="5">
    <source>
    </source>
</evidence>
<evidence type="ECO:0000269" key="6">
    <source>
    </source>
</evidence>
<evidence type="ECO:0000269" key="7">
    <source>
    </source>
</evidence>
<evidence type="ECO:0000269" key="8">
    <source>
    </source>
</evidence>
<evidence type="ECO:0000269" key="9">
    <source>
    </source>
</evidence>
<evidence type="ECO:0000269" key="10">
    <source>
    </source>
</evidence>
<evidence type="ECO:0000269" key="11">
    <source>
    </source>
</evidence>
<evidence type="ECO:0000303" key="12">
    <source>
    </source>
</evidence>
<evidence type="ECO:0000303" key="13">
    <source>
    </source>
</evidence>
<evidence type="ECO:0000303" key="14">
    <source>
    </source>
</evidence>
<evidence type="ECO:0000305" key="15"/>
<evidence type="ECO:0000305" key="16">
    <source>
    </source>
</evidence>
<evidence type="ECO:0000305" key="17">
    <source>
    </source>
</evidence>
<evidence type="ECO:0000305" key="18">
    <source>
    </source>
</evidence>
<evidence type="ECO:0000305" key="19">
    <source>
    </source>
</evidence>
<evidence type="ECO:0000305" key="20">
    <source>
    </source>
</evidence>
<evidence type="ECO:0000305" key="21">
    <source>
    </source>
</evidence>
<evidence type="ECO:0007744" key="22">
    <source>
        <dbReference type="PDB" id="3W5X"/>
    </source>
</evidence>
<evidence type="ECO:0007744" key="23">
    <source>
        <dbReference type="PDB" id="3W5Y"/>
    </source>
</evidence>
<evidence type="ECO:0007744" key="24">
    <source>
        <dbReference type="PDB" id="3W5Z"/>
    </source>
</evidence>
<evidence type="ECO:0007744" key="25">
    <source>
        <dbReference type="PDB" id="3W60"/>
    </source>
</evidence>
<evidence type="ECO:0007744" key="26">
    <source>
        <dbReference type="PDB" id="3W61"/>
    </source>
</evidence>
<evidence type="ECO:0007744" key="27">
    <source>
        <dbReference type="PDB" id="3W62"/>
    </source>
</evidence>
<evidence type="ECO:0007744" key="28">
    <source>
        <dbReference type="PDB" id="3W63"/>
    </source>
</evidence>
<evidence type="ECO:0007744" key="29">
    <source>
        <dbReference type="PDB" id="3W64"/>
    </source>
</evidence>
<evidence type="ECO:0007744" key="30">
    <source>
        <dbReference type="PDB" id="3W65"/>
    </source>
</evidence>
<evidence type="ECO:0007744" key="31">
    <source>
        <dbReference type="PDB" id="3W66"/>
    </source>
</evidence>
<evidence type="ECO:0007744" key="32">
    <source>
        <dbReference type="PDB" id="3W8G"/>
    </source>
</evidence>
<evidence type="ECO:0007744" key="33">
    <source>
        <dbReference type="PDB" id="3W8P"/>
    </source>
</evidence>
<evidence type="ECO:0007744" key="34">
    <source>
        <dbReference type="PDB" id="5HSP"/>
    </source>
</evidence>
<evidence type="ECO:0007744" key="35">
    <source>
        <dbReference type="PDB" id="6G55"/>
    </source>
</evidence>
<evidence type="ECO:0007744" key="36">
    <source>
        <dbReference type="PDB" id="6G5E"/>
    </source>
</evidence>
<evidence type="ECO:0007744" key="37">
    <source>
        <dbReference type="PDB" id="6G64"/>
    </source>
</evidence>
<evidence type="ECO:0007744" key="38">
    <source>
        <dbReference type="PDB" id="6G6I"/>
    </source>
</evidence>
<evidence type="ECO:0007829" key="39">
    <source>
        <dbReference type="PDB" id="3W8G"/>
    </source>
</evidence>
<evidence type="ECO:0007829" key="40">
    <source>
        <dbReference type="PDB" id="6G55"/>
    </source>
</evidence>
<evidence type="ECO:0007829" key="41">
    <source>
        <dbReference type="PDB" id="6H8G"/>
    </source>
</evidence>
<protein>
    <recommendedName>
        <fullName evidence="15">Magnetosome protein MamM</fullName>
    </recommendedName>
    <alternativeName>
        <fullName evidence="15">Probable iron transporter MamM</fullName>
    </alternativeName>
</protein>
<feature type="chain" id="PRO_0000447739" description="Magnetosome protein MamM">
    <location>
        <begin position="1"/>
        <end position="318"/>
    </location>
</feature>
<feature type="transmembrane region" description="Helical" evidence="1">
    <location>
        <begin position="13"/>
        <end position="33"/>
    </location>
</feature>
<feature type="transmembrane region" description="Helical" evidence="1">
    <location>
        <begin position="39"/>
        <end position="59"/>
    </location>
</feature>
<feature type="transmembrane region" description="Helical" evidence="1">
    <location>
        <begin position="81"/>
        <end position="101"/>
    </location>
</feature>
<feature type="transmembrane region" description="Helical" evidence="1">
    <location>
        <begin position="117"/>
        <end position="137"/>
    </location>
</feature>
<feature type="region of interest" description="Transmembrane domain (TMD)" evidence="17">
    <location>
        <begin position="1"/>
        <end position="210"/>
    </location>
</feature>
<feature type="region of interest" description="C-terminal domain (CTD)" evidence="17">
    <location>
        <begin position="211"/>
        <end position="318"/>
    </location>
</feature>
<feature type="binding site" evidence="21">
    <location>
        <position position="249"/>
    </location>
    <ligand>
        <name>Fe cation</name>
        <dbReference type="ChEBI" id="CHEBI:24875"/>
        <label>1</label>
    </ligand>
</feature>
<feature type="binding site" evidence="21">
    <location>
        <position position="264"/>
    </location>
    <ligand>
        <name>Fe cation</name>
        <dbReference type="ChEBI" id="CHEBI:24875"/>
        <label>2</label>
    </ligand>
</feature>
<feature type="binding site" evidence="21">
    <location>
        <position position="285"/>
    </location>
    <ligand>
        <name>Fe cation</name>
        <dbReference type="ChEBI" id="CHEBI:24875"/>
        <label>1</label>
    </ligand>
</feature>
<feature type="binding site" evidence="21">
    <location>
        <position position="289"/>
    </location>
    <ligand>
        <name>Fe cation</name>
        <dbReference type="ChEBI" id="CHEBI:24875"/>
        <label>3</label>
    </ligand>
</feature>
<feature type="mutagenesis site" description="Wild-type magnetic response." evidence="4">
    <original>CAVC</original>
    <variation>SAVS</variation>
    <location>
        <begin position="6"/>
        <end position="9"/>
    </location>
</feature>
<feature type="mutagenesis site" description="Wild-type magnetic response." evidence="4">
    <original>C</original>
    <variation>S</variation>
    <location>
        <position position="9"/>
    </location>
</feature>
<feature type="mutagenesis site" description="Loss of magnetic response." evidence="4">
    <original>Y</original>
    <variation>D</variation>
    <location>
        <position position="46"/>
    </location>
</feature>
<feature type="mutagenesis site" description="About 90% magnetic response." evidence="4">
    <original>Y</original>
    <variation>H</variation>
    <location>
        <position position="46"/>
    </location>
</feature>
<feature type="mutagenesis site" description="About 50% magnetic response, fewer cells have iron crystals which are smaller, in addition to magnetite (Fe(3)O(4)) crystals of hematite (Fe(2)O(3)) also form." evidence="4">
    <original>D</original>
    <variation>A</variation>
    <location>
        <position position="50"/>
    </location>
</feature>
<feature type="mutagenesis site" description="Wild-type magnetic response." evidence="4">
    <original>C</original>
    <variation>A</variation>
    <location>
        <position position="139"/>
    </location>
</feature>
<feature type="mutagenesis site" description="About 65% magnetic response, fewer cells have iron crystals which are larger." evidence="4">
    <original>H</original>
    <variation>A</variation>
    <location>
        <position position="155"/>
    </location>
</feature>
<feature type="mutagenesis site" description="About 55% magnetic response, fewer cells have iron crystals which have altered morphology." evidence="4">
    <original>D</original>
    <variation>A</variation>
    <location>
        <position position="159"/>
    </location>
</feature>
<feature type="mutagenesis site" description="CTD binds only 2 cations." evidence="11">
    <original>DMIIGVDPENTVEQAHEICEAVQAAVCGKIRRIESLH</original>
    <variation>AMIIGVDPENTVEQAHEICEAVQAAVCGKIRRIESLA</variation>
    <location>
        <begin position="249"/>
        <end position="285"/>
    </location>
</feature>
<feature type="mutagenesis site" description="Slightly decreased wild-type magnetic response, fewer, slightly smaller magnetite crystals. Significantly decreased magnetic response, many fewer, smaller crystals in vivo, isolated CTD does not bind cations; when associated with A-264." evidence="6">
    <original>D</original>
    <variation>A</variation>
    <location>
        <position position="249"/>
    </location>
</feature>
<feature type="mutagenesis site" description="CTD behaves like wild-type." evidence="9">
    <original>M</original>
    <variation>L</variation>
    <location>
        <position position="250"/>
    </location>
</feature>
<feature type="mutagenesis site" description="Severely impaired magnetic response, cells make very few, small magnetite particles, less MamB and MamM protein accumulate. CTD no longer dimerizes, CTD has cannot fold properly and is unstable." evidence="9">
    <original>M</original>
    <variation>P</variation>
    <location>
        <position position="250"/>
    </location>
</feature>
<feature type="mutagenesis site" description="Loss of magnetic response, reduces MamB expression." evidence="4">
    <location>
        <begin position="259"/>
        <end position="318"/>
    </location>
</feature>
<feature type="mutagenesis site" description="Nearly wild-type magnetic response." evidence="7">
    <original>V</original>
    <variation>G</variation>
    <location>
        <position position="260"/>
    </location>
</feature>
<feature type="mutagenesis site" description="CTD dimerizes, binds fewer cations. Loss of magnetic response, still stabilizes MamB." evidence="6 7">
    <original>V</original>
    <variation>P</variation>
    <location>
        <position position="260"/>
    </location>
</feature>
<feature type="mutagenesis site" description="Loss of magnetic response, still stabilizes MamB, CTD dimerizes, binds cations, dimer interface is tighter and twisted." evidence="7">
    <original>V</original>
    <variation>R</variation>
    <location>
        <position position="260"/>
    </location>
</feature>
<feature type="mutagenesis site" description="Significantly reduced magnetic response, many fewer, much smaller magnetite crystals formed, still stabilizes MamB, CTD dimerizes, binds fewer cations." evidence="7">
    <original>V</original>
    <variation>W</variation>
    <location>
        <position position="260"/>
    </location>
</feature>
<feature type="mutagenesis site" description="CTD binds only 1 cation." evidence="11">
    <original>HEICEAVQAAVCGKIRRIESLHVSAE</original>
    <variation>AEICEAVQAAVCGKIRRIESLHVSAA</variation>
    <location>
        <begin position="264"/>
        <end position="289"/>
    </location>
</feature>
<feature type="mutagenesis site" description="Wild-type magnetic response, no change in magnetite crystal size, number or shape. Significantly decreased magnetic response, many fewer, smaller crystals in vivo, isolated CTD does not bind cations; when associated with A-249." evidence="6">
    <original>H</original>
    <variation>A</variation>
    <location>
        <position position="264"/>
    </location>
</feature>
<feature type="mutagenesis site" description="Wild-type magnetic response, no change in magnetite crystal size, number or shape." evidence="6">
    <original>H</original>
    <variation>A</variation>
    <location>
        <position position="285"/>
    </location>
</feature>
<feature type="mutagenesis site" description="Wild-type magnetic response." evidence="4">
    <location>
        <begin position="289"/>
        <end position="318"/>
    </location>
</feature>
<feature type="mutagenesis site" description="Nearly wild-type magnetic response, fewer magnetite crystals of normal size and shape." evidence="6">
    <original>E</original>
    <variation>A</variation>
    <location>
        <position position="289"/>
    </location>
</feature>
<feature type="mutagenesis site" description="Wild-type magnetic response." evidence="4">
    <location>
        <begin position="309"/>
        <end position="318"/>
    </location>
</feature>
<feature type="helix" evidence="41">
    <location>
        <begin position="215"/>
        <end position="226"/>
    </location>
</feature>
<feature type="strand" evidence="41">
    <location>
        <begin position="234"/>
        <end position="242"/>
    </location>
</feature>
<feature type="strand" evidence="41">
    <location>
        <begin position="245"/>
        <end position="254"/>
    </location>
</feature>
<feature type="helix" evidence="41">
    <location>
        <begin position="260"/>
        <end position="277"/>
    </location>
</feature>
<feature type="strand" evidence="41">
    <location>
        <begin position="281"/>
        <end position="290"/>
    </location>
</feature>
<feature type="strand" evidence="39">
    <location>
        <begin position="300"/>
        <end position="302"/>
    </location>
</feature>
<feature type="helix" evidence="40">
    <location>
        <begin position="308"/>
        <end position="311"/>
    </location>
</feature>
<sequence>MRKSGCAVCSRSIGWVGLAVSTVLMVMKAFVGLIGGSQAMLADAMYSLKDMLNALMVIIGTTISSKPLDAEHPYGHGKVEFILSMVVSVVFIVLTGYLLVHAVQILLDESLHRTPHLIVLWAALVSIGVNVGMYFYSRCVAIETNSPLIKTMAKHHHGDATASGAVALGIIGAHYLNMPWIDPAVALWETIDLLLLGKVVFMDAYRGLMDHTAGEAVQNRIVEAAERVPGVRGVIHLRARYVGQDIWADMIIGVDPENTVEQAHEICEAVQAAVCGKIRRIESLHVSAEAREIGDTTKPSFSDQPLSFDEVMLSKVDN</sequence>
<name>MAMM_MAGGM</name>
<keyword id="KW-0002">3D-structure</keyword>
<keyword id="KW-0091">Biomineralization</keyword>
<keyword id="KW-0997">Cell inner membrane</keyword>
<keyword id="KW-1003">Cell membrane</keyword>
<keyword id="KW-0903">Direct protein sequencing</keyword>
<keyword id="KW-0406">Ion transport</keyword>
<keyword id="KW-0408">Iron</keyword>
<keyword id="KW-0410">Iron transport</keyword>
<keyword id="KW-1281">Magnetosome</keyword>
<keyword id="KW-0472">Membrane</keyword>
<keyword id="KW-0479">Metal-binding</keyword>
<keyword id="KW-1185">Reference proteome</keyword>
<keyword id="KW-0812">Transmembrane</keyword>
<keyword id="KW-1133">Transmembrane helix</keyword>
<keyword id="KW-0813">Transport</keyword>
<accession>V6F235</accession>
<accession>Q6NE57</accession>
<gene>
    <name evidence="12" type="primary">mamM</name>
    <name type="ordered locus">MGMSRv2__2375</name>
    <name type="ORF">mgI491</name>
    <name type="ORF">MGR_4095</name>
</gene>
<organism>
    <name type="scientific">Magnetospirillum gryphiswaldense (strain DSM 6361 / JCM 21280 / NBRC 15271 / MSR-1)</name>
    <dbReference type="NCBI Taxonomy" id="431944"/>
    <lineage>
        <taxon>Bacteria</taxon>
        <taxon>Pseudomonadati</taxon>
        <taxon>Pseudomonadota</taxon>
        <taxon>Alphaproteobacteria</taxon>
        <taxon>Rhodospirillales</taxon>
        <taxon>Rhodospirillaceae</taxon>
        <taxon>Magnetospirillum</taxon>
    </lineage>
</organism>